<comment type="subcellular location">
    <subcellularLocation>
        <location evidence="3">Membrane</location>
        <topology evidence="3">Single-pass membrane protein</topology>
    </subcellularLocation>
</comment>
<evidence type="ECO:0000255" key="1"/>
<evidence type="ECO:0000256" key="2">
    <source>
        <dbReference type="SAM" id="MobiDB-lite"/>
    </source>
</evidence>
<evidence type="ECO:0000305" key="3"/>
<keyword id="KW-0325">Glycoprotein</keyword>
<keyword id="KW-0472">Membrane</keyword>
<keyword id="KW-1185">Reference proteome</keyword>
<keyword id="KW-0732">Signal</keyword>
<keyword id="KW-0812">Transmembrane</keyword>
<keyword id="KW-1133">Transmembrane helix</keyword>
<feature type="signal peptide" evidence="1">
    <location>
        <begin position="1"/>
        <end position="25"/>
    </location>
</feature>
<feature type="chain" id="PRO_0000360403" description="Glycoprotein integral membrane protein 1">
    <location>
        <begin position="26"/>
        <end position="352"/>
    </location>
</feature>
<feature type="topological domain" description="Extracellular" evidence="1">
    <location>
        <begin position="26"/>
        <end position="281"/>
    </location>
</feature>
<feature type="transmembrane region" description="Helical" evidence="1">
    <location>
        <begin position="282"/>
        <end position="302"/>
    </location>
</feature>
<feature type="topological domain" description="Cytoplasmic" evidence="1">
    <location>
        <begin position="303"/>
        <end position="352"/>
    </location>
</feature>
<feature type="region of interest" description="Disordered" evidence="2">
    <location>
        <begin position="206"/>
        <end position="245"/>
    </location>
</feature>
<feature type="compositionally biased region" description="Basic and acidic residues" evidence="2">
    <location>
        <begin position="225"/>
        <end position="244"/>
    </location>
</feature>
<feature type="glycosylation site" description="N-linked (GlcNAc...) asparagine" evidence="1">
    <location>
        <position position="36"/>
    </location>
</feature>
<feature type="glycosylation site" description="N-linked (GlcNAc...) asparagine" evidence="1">
    <location>
        <position position="44"/>
    </location>
</feature>
<feature type="glycosylation site" description="N-linked (GlcNAc...) asparagine" evidence="1">
    <location>
        <position position="89"/>
    </location>
</feature>
<feature type="glycosylation site" description="N-linked (GlcNAc...) asparagine" evidence="1">
    <location>
        <position position="109"/>
    </location>
</feature>
<feature type="glycosylation site" description="N-linked (GlcNAc...) asparagine" evidence="1">
    <location>
        <position position="151"/>
    </location>
</feature>
<feature type="glycosylation site" description="N-linked (GlcNAc...) asparagine" evidence="1">
    <location>
        <position position="197"/>
    </location>
</feature>
<feature type="sequence conflict" description="In Ref. 2; AAI42754/AAI55129." evidence="3" ref="2">
    <original>S</original>
    <variation>T</variation>
    <location>
        <position position="95"/>
    </location>
</feature>
<feature type="sequence conflict" description="In Ref. 2; AAI42754/AAI55129." evidence="3" ref="2">
    <original>D</original>
    <variation>N</variation>
    <location>
        <position position="244"/>
    </location>
</feature>
<feature type="sequence conflict" description="In Ref. 2; AAI42754/AAI55129." evidence="3" ref="2">
    <original>L</original>
    <variation>V</variation>
    <location>
        <position position="307"/>
    </location>
</feature>
<accession>Q5RII3</accession>
<accession>A5PL58</accession>
<accession>Q5RFZ5</accession>
<gene>
    <name type="primary">ginm1</name>
    <name type="ORF">si:ch211-87e4.1</name>
    <name type="ORF">si:dkey-15j16.2</name>
</gene>
<protein>
    <recommendedName>
        <fullName>Glycoprotein integral membrane protein 1</fullName>
    </recommendedName>
</protein>
<proteinExistence type="evidence at transcript level"/>
<organism>
    <name type="scientific">Danio rerio</name>
    <name type="common">Zebrafish</name>
    <name type="synonym">Brachydanio rerio</name>
    <dbReference type="NCBI Taxonomy" id="7955"/>
    <lineage>
        <taxon>Eukaryota</taxon>
        <taxon>Metazoa</taxon>
        <taxon>Chordata</taxon>
        <taxon>Craniata</taxon>
        <taxon>Vertebrata</taxon>
        <taxon>Euteleostomi</taxon>
        <taxon>Actinopterygii</taxon>
        <taxon>Neopterygii</taxon>
        <taxon>Teleostei</taxon>
        <taxon>Ostariophysi</taxon>
        <taxon>Cypriniformes</taxon>
        <taxon>Danionidae</taxon>
        <taxon>Danioninae</taxon>
        <taxon>Danio</taxon>
    </lineage>
</organism>
<name>GINM1_DANRE</name>
<sequence length="352" mass="39274">MASRCKIHLTVAYLLILCILASAQSKQMTTETVVLNVTALSEINQTKYNVQINLNIGLLDNDIFINGAPLKPSGVTRMTCPALLLDGYNVSSGNSVDGLVSCELRLMVNQSYVQSDAAEQLLFLVLSQEIIQLADEKVQQPEISEVEIMWNQSSEQMTQVTSIYPSARSKLSIIPRENDVLVTDASVQSAVEDQVRNTTSHYLLKNSETTQEEIAAPGKLPETPLRMDPETLYESREEEERRSDSLLLEPPLSGSMSSYSVACQWVEKLRDKLRRFLSDSVPLFFLVMWVVVVGVAGSAVVIKILDLIFPSCEHRGFFHLNPETLMPDDEKVSLIDNMEGDMTEKSILLIEK</sequence>
<reference key="1">
    <citation type="journal article" date="2013" name="Nature">
        <title>The zebrafish reference genome sequence and its relationship to the human genome.</title>
        <authorList>
            <person name="Howe K."/>
            <person name="Clark M.D."/>
            <person name="Torroja C.F."/>
            <person name="Torrance J."/>
            <person name="Berthelot C."/>
            <person name="Muffato M."/>
            <person name="Collins J.E."/>
            <person name="Humphray S."/>
            <person name="McLaren K."/>
            <person name="Matthews L."/>
            <person name="McLaren S."/>
            <person name="Sealy I."/>
            <person name="Caccamo M."/>
            <person name="Churcher C."/>
            <person name="Scott C."/>
            <person name="Barrett J.C."/>
            <person name="Koch R."/>
            <person name="Rauch G.J."/>
            <person name="White S."/>
            <person name="Chow W."/>
            <person name="Kilian B."/>
            <person name="Quintais L.T."/>
            <person name="Guerra-Assuncao J.A."/>
            <person name="Zhou Y."/>
            <person name="Gu Y."/>
            <person name="Yen J."/>
            <person name="Vogel J.H."/>
            <person name="Eyre T."/>
            <person name="Redmond S."/>
            <person name="Banerjee R."/>
            <person name="Chi J."/>
            <person name="Fu B."/>
            <person name="Langley E."/>
            <person name="Maguire S.F."/>
            <person name="Laird G.K."/>
            <person name="Lloyd D."/>
            <person name="Kenyon E."/>
            <person name="Donaldson S."/>
            <person name="Sehra H."/>
            <person name="Almeida-King J."/>
            <person name="Loveland J."/>
            <person name="Trevanion S."/>
            <person name="Jones M."/>
            <person name="Quail M."/>
            <person name="Willey D."/>
            <person name="Hunt A."/>
            <person name="Burton J."/>
            <person name="Sims S."/>
            <person name="McLay K."/>
            <person name="Plumb B."/>
            <person name="Davis J."/>
            <person name="Clee C."/>
            <person name="Oliver K."/>
            <person name="Clark R."/>
            <person name="Riddle C."/>
            <person name="Elliot D."/>
            <person name="Threadgold G."/>
            <person name="Harden G."/>
            <person name="Ware D."/>
            <person name="Begum S."/>
            <person name="Mortimore B."/>
            <person name="Kerry G."/>
            <person name="Heath P."/>
            <person name="Phillimore B."/>
            <person name="Tracey A."/>
            <person name="Corby N."/>
            <person name="Dunn M."/>
            <person name="Johnson C."/>
            <person name="Wood J."/>
            <person name="Clark S."/>
            <person name="Pelan S."/>
            <person name="Griffiths G."/>
            <person name="Smith M."/>
            <person name="Glithero R."/>
            <person name="Howden P."/>
            <person name="Barker N."/>
            <person name="Lloyd C."/>
            <person name="Stevens C."/>
            <person name="Harley J."/>
            <person name="Holt K."/>
            <person name="Panagiotidis G."/>
            <person name="Lovell J."/>
            <person name="Beasley H."/>
            <person name="Henderson C."/>
            <person name="Gordon D."/>
            <person name="Auger K."/>
            <person name="Wright D."/>
            <person name="Collins J."/>
            <person name="Raisen C."/>
            <person name="Dyer L."/>
            <person name="Leung K."/>
            <person name="Robertson L."/>
            <person name="Ambridge K."/>
            <person name="Leongamornlert D."/>
            <person name="McGuire S."/>
            <person name="Gilderthorp R."/>
            <person name="Griffiths C."/>
            <person name="Manthravadi D."/>
            <person name="Nichol S."/>
            <person name="Barker G."/>
            <person name="Whitehead S."/>
            <person name="Kay M."/>
            <person name="Brown J."/>
            <person name="Murnane C."/>
            <person name="Gray E."/>
            <person name="Humphries M."/>
            <person name="Sycamore N."/>
            <person name="Barker D."/>
            <person name="Saunders D."/>
            <person name="Wallis J."/>
            <person name="Babbage A."/>
            <person name="Hammond S."/>
            <person name="Mashreghi-Mohammadi M."/>
            <person name="Barr L."/>
            <person name="Martin S."/>
            <person name="Wray P."/>
            <person name="Ellington A."/>
            <person name="Matthews N."/>
            <person name="Ellwood M."/>
            <person name="Woodmansey R."/>
            <person name="Clark G."/>
            <person name="Cooper J."/>
            <person name="Tromans A."/>
            <person name="Grafham D."/>
            <person name="Skuce C."/>
            <person name="Pandian R."/>
            <person name="Andrews R."/>
            <person name="Harrison E."/>
            <person name="Kimberley A."/>
            <person name="Garnett J."/>
            <person name="Fosker N."/>
            <person name="Hall R."/>
            <person name="Garner P."/>
            <person name="Kelly D."/>
            <person name="Bird C."/>
            <person name="Palmer S."/>
            <person name="Gehring I."/>
            <person name="Berger A."/>
            <person name="Dooley C.M."/>
            <person name="Ersan-Urun Z."/>
            <person name="Eser C."/>
            <person name="Geiger H."/>
            <person name="Geisler M."/>
            <person name="Karotki L."/>
            <person name="Kirn A."/>
            <person name="Konantz J."/>
            <person name="Konantz M."/>
            <person name="Oberlander M."/>
            <person name="Rudolph-Geiger S."/>
            <person name="Teucke M."/>
            <person name="Lanz C."/>
            <person name="Raddatz G."/>
            <person name="Osoegawa K."/>
            <person name="Zhu B."/>
            <person name="Rapp A."/>
            <person name="Widaa S."/>
            <person name="Langford C."/>
            <person name="Yang F."/>
            <person name="Schuster S.C."/>
            <person name="Carter N.P."/>
            <person name="Harrow J."/>
            <person name="Ning Z."/>
            <person name="Herrero J."/>
            <person name="Searle S.M."/>
            <person name="Enright A."/>
            <person name="Geisler R."/>
            <person name="Plasterk R.H."/>
            <person name="Lee C."/>
            <person name="Westerfield M."/>
            <person name="de Jong P.J."/>
            <person name="Zon L.I."/>
            <person name="Postlethwait J.H."/>
            <person name="Nusslein-Volhard C."/>
            <person name="Hubbard T.J."/>
            <person name="Roest Crollius H."/>
            <person name="Rogers J."/>
            <person name="Stemple D.L."/>
        </authorList>
    </citation>
    <scope>NUCLEOTIDE SEQUENCE [LARGE SCALE GENOMIC DNA]</scope>
    <source>
        <strain>Tuebingen</strain>
    </source>
</reference>
<reference key="2">
    <citation type="submission" date="2007-06" db="EMBL/GenBank/DDBJ databases">
        <authorList>
            <consortium name="NIH - Zebrafish Gene Collection (ZGC) project"/>
        </authorList>
    </citation>
    <scope>NUCLEOTIDE SEQUENCE [LARGE SCALE MRNA]</scope>
    <source>
        <tissue>Olfactory epithelium</tissue>
    </source>
</reference>
<dbReference type="EMBL" id="BX255904">
    <property type="protein sequence ID" value="CAI20704.1"/>
    <property type="molecule type" value="Genomic_DNA"/>
</dbReference>
<dbReference type="EMBL" id="CR388170">
    <property type="protein sequence ID" value="CAI12050.1"/>
    <property type="molecule type" value="Genomic_DNA"/>
</dbReference>
<dbReference type="EMBL" id="BC142753">
    <property type="protein sequence ID" value="AAI42754.1"/>
    <property type="molecule type" value="mRNA"/>
</dbReference>
<dbReference type="EMBL" id="BC155128">
    <property type="protein sequence ID" value="AAI55129.1"/>
    <property type="molecule type" value="mRNA"/>
</dbReference>
<dbReference type="RefSeq" id="NP_001073305.1">
    <property type="nucleotide sequence ID" value="NM_001079836.1"/>
</dbReference>
<dbReference type="SMR" id="Q5RII3"/>
<dbReference type="FunCoup" id="Q5RII3">
    <property type="interactions" value="1158"/>
</dbReference>
<dbReference type="STRING" id="7955.ENSDARP00000039045"/>
<dbReference type="GlyCosmos" id="Q5RII3">
    <property type="glycosylation" value="6 sites, No reported glycans"/>
</dbReference>
<dbReference type="PaxDb" id="7955-ENSDARP00000039045"/>
<dbReference type="Ensembl" id="ENSDART00000032393">
    <property type="protein sequence ID" value="ENSDARP00000039045"/>
    <property type="gene ID" value="ENSDARG00000021975"/>
</dbReference>
<dbReference type="GeneID" id="555775"/>
<dbReference type="KEGG" id="dre:555775"/>
<dbReference type="AGR" id="ZFIN:ZDB-GENE-030131-5900"/>
<dbReference type="CTD" id="116254"/>
<dbReference type="ZFIN" id="ZDB-GENE-030131-5900">
    <property type="gene designation" value="ginm1"/>
</dbReference>
<dbReference type="eggNOG" id="ENOG502RWUZ">
    <property type="taxonomic scope" value="Eukaryota"/>
</dbReference>
<dbReference type="HOGENOM" id="CLU_084379_0_0_1"/>
<dbReference type="InParanoid" id="Q5RII3"/>
<dbReference type="OMA" id="FNLMEVI"/>
<dbReference type="OrthoDB" id="10022429at2759"/>
<dbReference type="PhylomeDB" id="Q5RII3"/>
<dbReference type="TreeFam" id="TF333227"/>
<dbReference type="PRO" id="PR:Q5RII3"/>
<dbReference type="Proteomes" id="UP000000437">
    <property type="component" value="Chromosome 20"/>
</dbReference>
<dbReference type="Bgee" id="ENSDARG00000021975">
    <property type="expression patterns" value="Expressed in swim bladder and 24 other cell types or tissues"/>
</dbReference>
<dbReference type="GO" id="GO:0016020">
    <property type="term" value="C:membrane"/>
    <property type="evidence" value="ECO:0007669"/>
    <property type="project" value="UniProtKB-SubCell"/>
</dbReference>
<dbReference type="InterPro" id="IPR042319">
    <property type="entry name" value="GINM1"/>
</dbReference>
<dbReference type="PANTHER" id="PTHR28549">
    <property type="entry name" value="GLYCOPROTEIN INTEGRAL MEMBRANE PROTEIN 1"/>
    <property type="match status" value="1"/>
</dbReference>
<dbReference type="PANTHER" id="PTHR28549:SF1">
    <property type="entry name" value="GLYCOPROTEIN INTEGRAL MEMBRANE PROTEIN 1"/>
    <property type="match status" value="1"/>
</dbReference>